<accession>C1FN36</accession>
<proteinExistence type="inferred from homology"/>
<comment type="function">
    <text evidence="1">Catalyzes the condensation of ATP and 5-phosphoribose 1-diphosphate to form N'-(5'-phosphoribosyl)-ATP (PR-ATP). Has a crucial role in the pathway because the rate of histidine biosynthesis seems to be controlled primarily by regulation of HisG enzymatic activity.</text>
</comment>
<comment type="catalytic activity">
    <reaction evidence="1">
        <text>1-(5-phospho-beta-D-ribosyl)-ATP + diphosphate = 5-phospho-alpha-D-ribose 1-diphosphate + ATP</text>
        <dbReference type="Rhea" id="RHEA:18473"/>
        <dbReference type="ChEBI" id="CHEBI:30616"/>
        <dbReference type="ChEBI" id="CHEBI:33019"/>
        <dbReference type="ChEBI" id="CHEBI:58017"/>
        <dbReference type="ChEBI" id="CHEBI:73183"/>
        <dbReference type="EC" id="2.4.2.17"/>
    </reaction>
</comment>
<comment type="pathway">
    <text evidence="1">Amino-acid biosynthesis; L-histidine biosynthesis; L-histidine from 5-phospho-alpha-D-ribose 1-diphosphate: step 1/9.</text>
</comment>
<comment type="subunit">
    <text evidence="1">Heteromultimer composed of HisG and HisZ subunits.</text>
</comment>
<comment type="subcellular location">
    <subcellularLocation>
        <location evidence="1">Cytoplasm</location>
    </subcellularLocation>
</comment>
<comment type="domain">
    <text>Lacks the C-terminal regulatory region which is replaced by HisZ.</text>
</comment>
<comment type="similarity">
    <text evidence="1">Belongs to the ATP phosphoribosyltransferase family. Short subfamily.</text>
</comment>
<name>HIS1_CLOBJ</name>
<protein>
    <recommendedName>
        <fullName evidence="1">ATP phosphoribosyltransferase</fullName>
        <shortName evidence="1">ATP-PRT</shortName>
        <shortName evidence="1">ATP-PRTase</shortName>
        <ecNumber evidence="1">2.4.2.17</ecNumber>
    </recommendedName>
</protein>
<evidence type="ECO:0000255" key="1">
    <source>
        <dbReference type="HAMAP-Rule" id="MF_01018"/>
    </source>
</evidence>
<reference key="1">
    <citation type="submission" date="2008-10" db="EMBL/GenBank/DDBJ databases">
        <title>Genome sequence of Clostridium botulinum A2 Kyoto.</title>
        <authorList>
            <person name="Shrivastava S."/>
            <person name="Brinkac L.M."/>
            <person name="Brown J.L."/>
            <person name="Bruce D."/>
            <person name="Detter C.C."/>
            <person name="Johnson E.A."/>
            <person name="Munk C.A."/>
            <person name="Smith L.A."/>
            <person name="Smith T.J."/>
            <person name="Sutton G."/>
            <person name="Brettin T.S."/>
        </authorList>
    </citation>
    <scope>NUCLEOTIDE SEQUENCE [LARGE SCALE GENOMIC DNA]</scope>
    <source>
        <strain>Kyoto / Type A2</strain>
    </source>
</reference>
<gene>
    <name evidence="1" type="primary">hisG</name>
    <name type="ordered locus">CLM_1807</name>
</gene>
<organism>
    <name type="scientific">Clostridium botulinum (strain Kyoto / Type A2)</name>
    <dbReference type="NCBI Taxonomy" id="536232"/>
    <lineage>
        <taxon>Bacteria</taxon>
        <taxon>Bacillati</taxon>
        <taxon>Bacillota</taxon>
        <taxon>Clostridia</taxon>
        <taxon>Eubacteriales</taxon>
        <taxon>Clostridiaceae</taxon>
        <taxon>Clostridium</taxon>
    </lineage>
</organism>
<dbReference type="EC" id="2.4.2.17" evidence="1"/>
<dbReference type="EMBL" id="CP001581">
    <property type="protein sequence ID" value="ACO84900.1"/>
    <property type="molecule type" value="Genomic_DNA"/>
</dbReference>
<dbReference type="RefSeq" id="WP_003358779.1">
    <property type="nucleotide sequence ID" value="NC_012563.1"/>
</dbReference>
<dbReference type="SMR" id="C1FN36"/>
<dbReference type="GeneID" id="5185821"/>
<dbReference type="KEGG" id="cby:CLM_1807"/>
<dbReference type="eggNOG" id="COG0040">
    <property type="taxonomic scope" value="Bacteria"/>
</dbReference>
<dbReference type="HOGENOM" id="CLU_038115_2_0_9"/>
<dbReference type="UniPathway" id="UPA00031">
    <property type="reaction ID" value="UER00006"/>
</dbReference>
<dbReference type="Proteomes" id="UP000001374">
    <property type="component" value="Chromosome"/>
</dbReference>
<dbReference type="GO" id="GO:0005737">
    <property type="term" value="C:cytoplasm"/>
    <property type="evidence" value="ECO:0007669"/>
    <property type="project" value="UniProtKB-SubCell"/>
</dbReference>
<dbReference type="GO" id="GO:0005524">
    <property type="term" value="F:ATP binding"/>
    <property type="evidence" value="ECO:0007669"/>
    <property type="project" value="UniProtKB-KW"/>
</dbReference>
<dbReference type="GO" id="GO:0003879">
    <property type="term" value="F:ATP phosphoribosyltransferase activity"/>
    <property type="evidence" value="ECO:0007669"/>
    <property type="project" value="UniProtKB-UniRule"/>
</dbReference>
<dbReference type="GO" id="GO:0000105">
    <property type="term" value="P:L-histidine biosynthetic process"/>
    <property type="evidence" value="ECO:0007669"/>
    <property type="project" value="UniProtKB-UniRule"/>
</dbReference>
<dbReference type="CDD" id="cd13595">
    <property type="entry name" value="PBP2_HisGs"/>
    <property type="match status" value="1"/>
</dbReference>
<dbReference type="FunFam" id="3.40.190.10:FF:000008">
    <property type="entry name" value="ATP phosphoribosyltransferase"/>
    <property type="match status" value="1"/>
</dbReference>
<dbReference type="FunFam" id="3.40.190.10:FF:000011">
    <property type="entry name" value="ATP phosphoribosyltransferase"/>
    <property type="match status" value="1"/>
</dbReference>
<dbReference type="Gene3D" id="3.40.190.10">
    <property type="entry name" value="Periplasmic binding protein-like II"/>
    <property type="match status" value="2"/>
</dbReference>
<dbReference type="HAMAP" id="MF_01018">
    <property type="entry name" value="HisG_Short"/>
    <property type="match status" value="1"/>
</dbReference>
<dbReference type="InterPro" id="IPR013820">
    <property type="entry name" value="ATP_PRibTrfase_cat"/>
</dbReference>
<dbReference type="InterPro" id="IPR018198">
    <property type="entry name" value="ATP_PRibTrfase_CS"/>
</dbReference>
<dbReference type="InterPro" id="IPR001348">
    <property type="entry name" value="ATP_PRibTrfase_HisG"/>
</dbReference>
<dbReference type="InterPro" id="IPR024893">
    <property type="entry name" value="ATP_PRibTrfase_HisG_short"/>
</dbReference>
<dbReference type="NCBIfam" id="TIGR00070">
    <property type="entry name" value="hisG"/>
    <property type="match status" value="1"/>
</dbReference>
<dbReference type="PANTHER" id="PTHR21403:SF8">
    <property type="entry name" value="ATP PHOSPHORIBOSYLTRANSFERASE"/>
    <property type="match status" value="1"/>
</dbReference>
<dbReference type="PANTHER" id="PTHR21403">
    <property type="entry name" value="ATP PHOSPHORIBOSYLTRANSFERASE ATP-PRTASE"/>
    <property type="match status" value="1"/>
</dbReference>
<dbReference type="Pfam" id="PF01634">
    <property type="entry name" value="HisG"/>
    <property type="match status" value="1"/>
</dbReference>
<dbReference type="SUPFAM" id="SSF53850">
    <property type="entry name" value="Periplasmic binding protein-like II"/>
    <property type="match status" value="1"/>
</dbReference>
<dbReference type="PROSITE" id="PS01316">
    <property type="entry name" value="ATP_P_PHORIBOSYLTR"/>
    <property type="match status" value="1"/>
</dbReference>
<feature type="chain" id="PRO_1000213259" description="ATP phosphoribosyltransferase">
    <location>
        <begin position="1"/>
        <end position="212"/>
    </location>
</feature>
<sequence>MKNVKIALTKGRLEKKAIEIFKTININTRELEDKGRKLIFNCENEEYNIELFLVKAKDVETYVEYGAADIGIVGKDTLMETNKEFYEVLDLNVGKCKFALAALPSFKLDQGYNRKKIATKYPNIAREYFRKKGMDVELIKIEGSVELGPIVGLADAIVDIVETGNTLRENGLVVVEDICEISARMIVNKASMKTKKDEIIKIIENVSEVIRQ</sequence>
<keyword id="KW-0028">Amino-acid biosynthesis</keyword>
<keyword id="KW-0067">ATP-binding</keyword>
<keyword id="KW-0963">Cytoplasm</keyword>
<keyword id="KW-0328">Glycosyltransferase</keyword>
<keyword id="KW-0368">Histidine biosynthesis</keyword>
<keyword id="KW-0547">Nucleotide-binding</keyword>
<keyword id="KW-0808">Transferase</keyword>